<reference key="1">
    <citation type="journal article" date="1997" name="DNA Res.">
        <title>Prediction of the coding sequences of unidentified human genes. VIII. 78 new cDNA clones from brain which code for large proteins in vitro.</title>
        <authorList>
            <person name="Ishikawa K."/>
            <person name="Nagase T."/>
            <person name="Nakajima D."/>
            <person name="Seki N."/>
            <person name="Ohira M."/>
            <person name="Miyajima N."/>
            <person name="Tanaka A."/>
            <person name="Kotani H."/>
            <person name="Nomura N."/>
            <person name="Ohara O."/>
        </authorList>
    </citation>
    <scope>NUCLEOTIDE SEQUENCE [LARGE SCALE MRNA] (ISOFORM 2)</scope>
    <source>
        <tissue>Brain</tissue>
    </source>
</reference>
<reference key="2">
    <citation type="submission" date="2004-01" db="EMBL/GenBank/DDBJ databases">
        <authorList>
            <person name="Okazaki N."/>
            <person name="Kikuno R.F."/>
            <person name="Nagase T."/>
            <person name="Ohara O."/>
            <person name="Koga H."/>
        </authorList>
    </citation>
    <scope>SEQUENCE REVISION</scope>
</reference>
<reference key="3">
    <citation type="journal article" date="2004" name="Nature">
        <title>The DNA sequence and comparative analysis of human chromosome 10.</title>
        <authorList>
            <person name="Deloukas P."/>
            <person name="Earthrowl M.E."/>
            <person name="Grafham D.V."/>
            <person name="Rubenfield M."/>
            <person name="French L."/>
            <person name="Steward C.A."/>
            <person name="Sims S.K."/>
            <person name="Jones M.C."/>
            <person name="Searle S."/>
            <person name="Scott C."/>
            <person name="Howe K."/>
            <person name="Hunt S.E."/>
            <person name="Andrews T.D."/>
            <person name="Gilbert J.G.R."/>
            <person name="Swarbreck D."/>
            <person name="Ashurst J.L."/>
            <person name="Taylor A."/>
            <person name="Battles J."/>
            <person name="Bird C.P."/>
            <person name="Ainscough R."/>
            <person name="Almeida J.P."/>
            <person name="Ashwell R.I.S."/>
            <person name="Ambrose K.D."/>
            <person name="Babbage A.K."/>
            <person name="Bagguley C.L."/>
            <person name="Bailey J."/>
            <person name="Banerjee R."/>
            <person name="Bates K."/>
            <person name="Beasley H."/>
            <person name="Bray-Allen S."/>
            <person name="Brown A.J."/>
            <person name="Brown J.Y."/>
            <person name="Burford D.C."/>
            <person name="Burrill W."/>
            <person name="Burton J."/>
            <person name="Cahill P."/>
            <person name="Camire D."/>
            <person name="Carter N.P."/>
            <person name="Chapman J.C."/>
            <person name="Clark S.Y."/>
            <person name="Clarke G."/>
            <person name="Clee C.M."/>
            <person name="Clegg S."/>
            <person name="Corby N."/>
            <person name="Coulson A."/>
            <person name="Dhami P."/>
            <person name="Dutta I."/>
            <person name="Dunn M."/>
            <person name="Faulkner L."/>
            <person name="Frankish A."/>
            <person name="Frankland J.A."/>
            <person name="Garner P."/>
            <person name="Garnett J."/>
            <person name="Gribble S."/>
            <person name="Griffiths C."/>
            <person name="Grocock R."/>
            <person name="Gustafson E."/>
            <person name="Hammond S."/>
            <person name="Harley J.L."/>
            <person name="Hart E."/>
            <person name="Heath P.D."/>
            <person name="Ho T.P."/>
            <person name="Hopkins B."/>
            <person name="Horne J."/>
            <person name="Howden P.J."/>
            <person name="Huckle E."/>
            <person name="Hynds C."/>
            <person name="Johnson C."/>
            <person name="Johnson D."/>
            <person name="Kana A."/>
            <person name="Kay M."/>
            <person name="Kimberley A.M."/>
            <person name="Kershaw J.K."/>
            <person name="Kokkinaki M."/>
            <person name="Laird G.K."/>
            <person name="Lawlor S."/>
            <person name="Lee H.M."/>
            <person name="Leongamornlert D.A."/>
            <person name="Laird G."/>
            <person name="Lloyd C."/>
            <person name="Lloyd D.M."/>
            <person name="Loveland J."/>
            <person name="Lovell J."/>
            <person name="McLaren S."/>
            <person name="McLay K.E."/>
            <person name="McMurray A."/>
            <person name="Mashreghi-Mohammadi M."/>
            <person name="Matthews L."/>
            <person name="Milne S."/>
            <person name="Nickerson T."/>
            <person name="Nguyen M."/>
            <person name="Overton-Larty E."/>
            <person name="Palmer S.A."/>
            <person name="Pearce A.V."/>
            <person name="Peck A.I."/>
            <person name="Pelan S."/>
            <person name="Phillimore B."/>
            <person name="Porter K."/>
            <person name="Rice C.M."/>
            <person name="Rogosin A."/>
            <person name="Ross M.T."/>
            <person name="Sarafidou T."/>
            <person name="Sehra H.K."/>
            <person name="Shownkeen R."/>
            <person name="Skuce C.D."/>
            <person name="Smith M."/>
            <person name="Standring L."/>
            <person name="Sycamore N."/>
            <person name="Tester J."/>
            <person name="Thorpe A."/>
            <person name="Torcasso W."/>
            <person name="Tracey A."/>
            <person name="Tromans A."/>
            <person name="Tsolas J."/>
            <person name="Wall M."/>
            <person name="Walsh J."/>
            <person name="Wang H."/>
            <person name="Weinstock K."/>
            <person name="West A.P."/>
            <person name="Willey D.L."/>
            <person name="Whitehead S.L."/>
            <person name="Wilming L."/>
            <person name="Wray P.W."/>
            <person name="Young L."/>
            <person name="Chen Y."/>
            <person name="Lovering R.C."/>
            <person name="Moschonas N.K."/>
            <person name="Siebert R."/>
            <person name="Fechtel K."/>
            <person name="Bentley D."/>
            <person name="Durbin R.M."/>
            <person name="Hubbard T."/>
            <person name="Doucette-Stamm L."/>
            <person name="Beck S."/>
            <person name="Smith D.R."/>
            <person name="Rogers J."/>
        </authorList>
    </citation>
    <scope>NUCLEOTIDE SEQUENCE [LARGE SCALE GENOMIC DNA]</scope>
</reference>
<reference key="4">
    <citation type="submission" date="2005-09" db="EMBL/GenBank/DDBJ databases">
        <authorList>
            <person name="Mural R.J."/>
            <person name="Istrail S."/>
            <person name="Sutton G.G."/>
            <person name="Florea L."/>
            <person name="Halpern A.L."/>
            <person name="Mobarry C.M."/>
            <person name="Lippert R."/>
            <person name="Walenz B."/>
            <person name="Shatkay H."/>
            <person name="Dew I."/>
            <person name="Miller J.R."/>
            <person name="Flanigan M.J."/>
            <person name="Edwards N.J."/>
            <person name="Bolanos R."/>
            <person name="Fasulo D."/>
            <person name="Halldorsson B.V."/>
            <person name="Hannenhalli S."/>
            <person name="Turner R."/>
            <person name="Yooseph S."/>
            <person name="Lu F."/>
            <person name="Nusskern D.R."/>
            <person name="Shue B.C."/>
            <person name="Zheng X.H."/>
            <person name="Zhong F."/>
            <person name="Delcher A.L."/>
            <person name="Huson D.H."/>
            <person name="Kravitz S.A."/>
            <person name="Mouchard L."/>
            <person name="Reinert K."/>
            <person name="Remington K.A."/>
            <person name="Clark A.G."/>
            <person name="Waterman M.S."/>
            <person name="Eichler E.E."/>
            <person name="Adams M.D."/>
            <person name="Hunkapiller M.W."/>
            <person name="Myers E.W."/>
            <person name="Venter J.C."/>
        </authorList>
    </citation>
    <scope>NUCLEOTIDE SEQUENCE [LARGE SCALE GENOMIC DNA]</scope>
</reference>
<reference key="5">
    <citation type="journal article" date="2003" name="J. Biol. Chem.">
        <title>The adaptor protein fish associates with members of the ADAMs family and localizes to podosomes of Src-transformed cells.</title>
        <authorList>
            <person name="Abram C.L."/>
            <person name="Seals D.F."/>
            <person name="Pass I."/>
            <person name="Salinsky D."/>
            <person name="Maurer L."/>
            <person name="Roth T.M."/>
            <person name="Courtneidge S.A."/>
        </authorList>
    </citation>
    <scope>FUNCTION</scope>
    <scope>SUBCELLULAR LOCATION</scope>
    <scope>DOMAIN</scope>
    <scope>INTERACTION WITH ADAM12; ADAM15 AND ADAM19</scope>
    <scope>MUTAGENESIS OF ARG-42 AND ARG-93</scope>
</reference>
<reference key="6">
    <citation type="journal article" date="2005" name="Cancer Cell">
        <title>The adaptor protein Tks5/Fish is required for podosome formation and function, and for the protease-driven invasion of cancer cells.</title>
        <authorList>
            <person name="Seals D.F."/>
            <person name="Azucena E.F. Jr."/>
            <person name="Pass I."/>
            <person name="Tesfay L."/>
            <person name="Gordon R."/>
            <person name="Woodrow M."/>
            <person name="Resau J.H."/>
            <person name="Courtneidge S.A."/>
        </authorList>
    </citation>
    <scope>FUNCTION</scope>
    <scope>SUBCELLULAR LOCATION</scope>
    <scope>DOMAIN</scope>
    <scope>TISSUE SPECIFICITY</scope>
</reference>
<reference key="7">
    <citation type="journal article" date="2005" name="Proc. Natl. Acad. Sci. U.S.A.">
        <title>Amyloid-beta neurotoxicity is mediated by FISH adapter protein and ADAM12 metalloprotease activity.</title>
        <authorList>
            <person name="Malinin N.L."/>
            <person name="Wright S."/>
            <person name="Seubert P."/>
            <person name="Schenk D."/>
            <person name="Griswold-Prenner I."/>
        </authorList>
    </citation>
    <scope>FUNCTION</scope>
    <scope>INTERACTION WITH ADAM12</scope>
    <scope>PTM</scope>
</reference>
<reference key="8">
    <citation type="journal article" date="2007" name="Science">
        <title>ATM and ATR substrate analysis reveals extensive protein networks responsive to DNA damage.</title>
        <authorList>
            <person name="Matsuoka S."/>
            <person name="Ballif B.A."/>
            <person name="Smogorzewska A."/>
            <person name="McDonald E.R. III"/>
            <person name="Hurov K.E."/>
            <person name="Luo J."/>
            <person name="Bakalarski C.E."/>
            <person name="Zhao Z."/>
            <person name="Solimini N."/>
            <person name="Lerenthal Y."/>
            <person name="Shiloh Y."/>
            <person name="Gygi S.P."/>
            <person name="Elledge S.J."/>
        </authorList>
    </citation>
    <scope>IDENTIFICATION BY MASS SPECTROMETRY [LARGE SCALE ANALYSIS]</scope>
    <source>
        <tissue>Embryonic kidney</tissue>
    </source>
</reference>
<reference key="9">
    <citation type="journal article" date="2008" name="Eur. J. Cell Biol.">
        <title>A role for the podosome/invadopodia scaffold protein Tks5 in tumor growth in vivo.</title>
        <authorList>
            <person name="Blouw B."/>
            <person name="Seals D.F."/>
            <person name="Pass I."/>
            <person name="Diaz B."/>
            <person name="Courtneidge S.A."/>
        </authorList>
    </citation>
    <scope>SUBCELLULAR LOCATION</scope>
</reference>
<reference key="10">
    <citation type="journal article" date="2008" name="Proc. Natl. Acad. Sci. U.S.A.">
        <title>A quantitative atlas of mitotic phosphorylation.</title>
        <authorList>
            <person name="Dephoure N."/>
            <person name="Zhou C."/>
            <person name="Villen J."/>
            <person name="Beausoleil S.A."/>
            <person name="Bakalarski C.E."/>
            <person name="Elledge S.J."/>
            <person name="Gygi S.P."/>
        </authorList>
    </citation>
    <scope>PHOSPHORYLATION [LARGE SCALE ANALYSIS] AT SER-421; SER-547; SER-567; SER-593; SER-644; THR-731; SER-1002; SER-1016; SER-1017 AND SER-1038</scope>
    <scope>IDENTIFICATION BY MASS SPECTROMETRY [LARGE SCALE ANALYSIS]</scope>
    <source>
        <tissue>Cervix carcinoma</tissue>
    </source>
</reference>
<reference key="11">
    <citation type="journal article" date="2009" name="BMC Immunol.">
        <title>Identification of SH3 domain interaction partners of human FasL (CD178) by phage display screening.</title>
        <authorList>
            <person name="Voss M."/>
            <person name="Lettau M."/>
            <person name="Janssen O."/>
        </authorList>
    </citation>
    <scope>INTERACTION WITH FASLG</scope>
</reference>
<reference key="12">
    <citation type="journal article" date="2009" name="Sci. Signal.">
        <title>Novel p47(phox)-related organizers regulate localized NADPH oxidase 1 (Nox1) activity.</title>
        <authorList>
            <person name="Gianni D."/>
            <person name="Diaz B."/>
            <person name="Taulet N."/>
            <person name="Fowler B."/>
            <person name="Courtneidge S.A."/>
            <person name="Bokoch G.M."/>
        </authorList>
    </citation>
    <scope>FUNCTION</scope>
    <scope>INTERACTION WITH NOXA1</scope>
</reference>
<reference key="13">
    <citation type="journal article" date="2010" name="Sci. Signal.">
        <title>Quantitative phosphoproteomics reveals widespread full phosphorylation site occupancy during mitosis.</title>
        <authorList>
            <person name="Olsen J.V."/>
            <person name="Vermeulen M."/>
            <person name="Santamaria A."/>
            <person name="Kumar C."/>
            <person name="Miller M.L."/>
            <person name="Jensen L.J."/>
            <person name="Gnad F."/>
            <person name="Cox J."/>
            <person name="Jensen T.S."/>
            <person name="Nigg E.A."/>
            <person name="Brunak S."/>
            <person name="Mann M."/>
        </authorList>
    </citation>
    <scope>PHOSPHORYLATION [LARGE SCALE ANALYSIS] AT SER-1002</scope>
    <scope>IDENTIFICATION BY MASS SPECTROMETRY [LARGE SCALE ANALYSIS]</scope>
    <source>
        <tissue>Cervix carcinoma</tissue>
    </source>
</reference>
<reference key="14">
    <citation type="journal article" date="2011" name="Eur. J. Cell Biol.">
        <title>Direct interaction between Tks proteins and the N-terminal proline-rich region (PRR) of NoxA1 mediates Nox1-dependent ROS generation.</title>
        <authorList>
            <person name="Gianni D."/>
            <person name="Dermardirossian C."/>
            <person name="Bokoch G.M."/>
        </authorList>
    </citation>
    <scope>FUNCTION</scope>
    <scope>INTERACTION WITH NOXA1 AND NOXO1</scope>
</reference>
<reference key="15">
    <citation type="journal article" date="2013" name="J. Proteome Res.">
        <title>Toward a comprehensive characterization of a human cancer cell phosphoproteome.</title>
        <authorList>
            <person name="Zhou H."/>
            <person name="Di Palma S."/>
            <person name="Preisinger C."/>
            <person name="Peng M."/>
            <person name="Polat A.N."/>
            <person name="Heck A.J."/>
            <person name="Mohammed S."/>
        </authorList>
    </citation>
    <scope>PHOSPHORYLATION [LARGE SCALE ANALYSIS] AT SER-406; SER-421; SER-547; SER-1002 AND SER-1038</scope>
    <scope>IDENTIFICATION BY MASS SPECTROMETRY [LARGE SCALE ANALYSIS]</scope>
    <source>
        <tissue>Cervix carcinoma</tissue>
        <tissue>Erythroleukemia</tissue>
    </source>
</reference>
<reference key="16">
    <citation type="journal article" date="2014" name="J. Proteomics">
        <title>An enzyme assisted RP-RPLC approach for in-depth analysis of human liver phosphoproteome.</title>
        <authorList>
            <person name="Bian Y."/>
            <person name="Song C."/>
            <person name="Cheng K."/>
            <person name="Dong M."/>
            <person name="Wang F."/>
            <person name="Huang J."/>
            <person name="Sun D."/>
            <person name="Wang L."/>
            <person name="Ye M."/>
            <person name="Zou H."/>
        </authorList>
    </citation>
    <scope>PHOSPHORYLATION [LARGE SCALE ANALYSIS] AT SER-547 AND SER-1038</scope>
    <scope>IDENTIFICATION BY MASS SPECTROMETRY [LARGE SCALE ANALYSIS]</scope>
    <source>
        <tissue>Liver</tissue>
    </source>
</reference>
<reference key="17">
    <citation type="journal article" date="2016" name="J. Cell Sci.">
        <title>The role and regulation of Rab40b-Tks5 complex during invadopodia formation and cancer cell invasion.</title>
        <authorList>
            <person name="Jacob A."/>
            <person name="Linklater E."/>
            <person name="Bayless B.A."/>
            <person name="Lyons T."/>
            <person name="Prekeris R."/>
        </authorList>
    </citation>
    <scope>FUNCTION</scope>
    <scope>INTERACTION WITH RAB40B</scope>
    <scope>DOMAIN</scope>
    <scope>MUTAGENESIS OF TYR-24</scope>
</reference>
<reference key="18">
    <citation type="submission" date="2007-08" db="PDB data bank">
        <title>Solution structure of the SH3 domains from human KIAA0418 protein.</title>
        <authorList>
            <consortium name="RIKEN structural genomics initiative (RSGI)"/>
        </authorList>
    </citation>
    <scope>STRUCTURE BY NMR OF 168-325 AND 1072-1133</scope>
</reference>
<organism>
    <name type="scientific">Homo sapiens</name>
    <name type="common">Human</name>
    <dbReference type="NCBI Taxonomy" id="9606"/>
    <lineage>
        <taxon>Eukaryota</taxon>
        <taxon>Metazoa</taxon>
        <taxon>Chordata</taxon>
        <taxon>Craniata</taxon>
        <taxon>Vertebrata</taxon>
        <taxon>Euteleostomi</taxon>
        <taxon>Mammalia</taxon>
        <taxon>Eutheria</taxon>
        <taxon>Euarchontoglires</taxon>
        <taxon>Primates</taxon>
        <taxon>Haplorrhini</taxon>
        <taxon>Catarrhini</taxon>
        <taxon>Hominidae</taxon>
        <taxon>Homo</taxon>
    </lineage>
</organism>
<evidence type="ECO:0000250" key="1"/>
<evidence type="ECO:0000250" key="2">
    <source>
        <dbReference type="UniProtKB" id="O89032"/>
    </source>
</evidence>
<evidence type="ECO:0000255" key="3"/>
<evidence type="ECO:0000255" key="4">
    <source>
        <dbReference type="PROSITE-ProRule" id="PRU00147"/>
    </source>
</evidence>
<evidence type="ECO:0000255" key="5">
    <source>
        <dbReference type="PROSITE-ProRule" id="PRU00192"/>
    </source>
</evidence>
<evidence type="ECO:0000256" key="6">
    <source>
        <dbReference type="SAM" id="MobiDB-lite"/>
    </source>
</evidence>
<evidence type="ECO:0000269" key="7">
    <source>
    </source>
</evidence>
<evidence type="ECO:0000269" key="8">
    <source>
    </source>
</evidence>
<evidence type="ECO:0000269" key="9">
    <source>
    </source>
</evidence>
<evidence type="ECO:0000269" key="10">
    <source>
    </source>
</evidence>
<evidence type="ECO:0000269" key="11">
    <source>
    </source>
</evidence>
<evidence type="ECO:0000269" key="12">
    <source>
    </source>
</evidence>
<evidence type="ECO:0000269" key="13">
    <source>
    </source>
</evidence>
<evidence type="ECO:0000303" key="14">
    <source>
    </source>
</evidence>
<evidence type="ECO:0000303" key="15">
    <source>
    </source>
</evidence>
<evidence type="ECO:0000303" key="16">
    <source ref="18"/>
</evidence>
<evidence type="ECO:0000305" key="17"/>
<evidence type="ECO:0000312" key="18">
    <source>
        <dbReference type="HGNC" id="HGNC:23664"/>
    </source>
</evidence>
<evidence type="ECO:0007744" key="19">
    <source>
    </source>
</evidence>
<evidence type="ECO:0007744" key="20">
    <source>
    </source>
</evidence>
<evidence type="ECO:0007744" key="21">
    <source>
    </source>
</evidence>
<evidence type="ECO:0007744" key="22">
    <source>
    </source>
</evidence>
<evidence type="ECO:0007829" key="23">
    <source>
        <dbReference type="PDB" id="2DNU"/>
    </source>
</evidence>
<evidence type="ECO:0007829" key="24">
    <source>
        <dbReference type="PDB" id="2EGA"/>
    </source>
</evidence>
<evidence type="ECO:0007829" key="25">
    <source>
        <dbReference type="PDB" id="2EGC"/>
    </source>
</evidence>
<evidence type="ECO:0007829" key="26">
    <source>
        <dbReference type="PDB" id="2EKH"/>
    </source>
</evidence>
<sequence>MLAYCVQDATVVDVEKRRNPSKHYVYIINVTWSDSTSQTIYRRYSKFFDLQMQLLDKFPIEGGQKDPKQRIIPFLPGKILFRRSHIRDVAVKRLKPIDEYCRALVRLPPHISQCDEVFRFFEARPEDVNPPKEDYGSSKRKSVWLSSWAESPKKDVTGADATAEPMILEQYVVVSNYKKQENSELSLQAGEVVDVIEKNESGWWFVSTSEEQGWVPATYLEAQNGTRDDSDINTSKTGEVSKRRKAHLRRLDRRWTLGGMVNRQHSREEKYVTVQPYTSQSKDEIGFEKGVTVEVIRKNLEGWWYIRYLGKEGWAPASYLKKAKDDLPTRKKNLAGPVEIIGNIMEISNLLNKKASGDKETPPAEGEGHEAPIAKKEISLPILCNASNGSAVGVPDRTVSRLAQGSPAVARIAPQRAQISSPNLRTRPPPRRESSLGFQLPKPPEPPSVEVEYYTIAEFQSCISDGISFRGGQKAEVIDKNSGGWWYVQIGEKEGWAPASYIDKRKKPNLSRRTSTLTRPKVPPPAPPSKPKEAEEGPTGASESQDSPRKLKYEEPEYDIPAFGFDSEPELSEEPVEDRASGERRPAQPHRPSPASSLQRARFKVGESSEDVALEEETIYENEGFRPYAEDTLSARGSSGDSDSPGSSSLSLTRKNSPKSGSPKSSSLLKLKAEKNAQAEMGKNHSSASFSSSITINTTCCSSSSSSSSSLSKTSGDLKPRSASDAGIRGTPKVRAKKDADANAGLTSCPRAKPSVRPKPFLNRAESQSQEKMDISTLRRQLRPTGQLRGGLKGSKSEDSELPPQTASEAPSEGSRRSSSDLITLPATTPPCPTKKEWEGPATSYMTCSAYQKVQDSEISFPAGVEVQVLEKQESGWWYVRFGELEGWAPSHYLVLDENEQPDPSGKELDTVPAKGRQNEGKSDSLEKIERRVQALNTVNQSKKATPPIPSKPPGGFGKTSGTPAVKMRNGVRQVAVRPQSVFVSPPPKDNNLSCALRRNESLTATDGLRGVRRNSSFSTARSAAAEAKGRLAERAASQGSDSPLLPAQRNSIPVSPVRPKPIEKSQFIHNNLKDVYVSIADYEGDEETAGFQEGVSMEVLERNPNGWWYCQILDGVKPFKGWVPSNYLEKKN</sequence>
<proteinExistence type="evidence at protein level"/>
<comment type="function">
    <text evidence="7 8 9 10 12 13">Adapter protein involved in invadopodia and podosome formation, extracellular matrix degradation and invasiveness of some cancer cells (PubMed:27789576). Binds matrix metalloproteinases (ADAMs), NADPH oxidases (NOXs) and phosphoinositides. Acts as an organizer protein that allows NOX1- or NOX3-dependent reactive oxygen species (ROS) generation and ROS localization. In association with ADAM12, mediates the neurotoxic effect of amyloid-beta peptide.</text>
</comment>
<comment type="subunit">
    <text evidence="1 7 9 10 11 12 13">Interacts (via N-terminus) with CYBA (By similarity). Interacts with ADAM12, ADAM15 and ADAM19. Interacts with NOXO1. Interacts (via SH3 domains) with NOXA1. Interacts with FASLG. Interacts (via PX domain) with RAB40B (GTP-bound); interaction promotes invadopodia-mediated extracellular matrix degradation (PubMed:27789576).</text>
</comment>
<comment type="interaction">
    <interactant intactId="EBI-2483234">
        <id>Q5TCZ1</id>
    </interactant>
    <interactant intactId="EBI-77818">
        <id>Q13444</id>
        <label>ADAM15</label>
    </interactant>
    <organismsDiffer>false</organismsDiffer>
    <experiments>4</experiments>
</comment>
<comment type="interaction">
    <interactant intactId="EBI-2483234">
        <id>Q5TCZ1</id>
    </interactant>
    <interactant intactId="EBI-8567699">
        <id>Q9H013</id>
        <label>ADAM19</label>
    </interactant>
    <organismsDiffer>false</organismsDiffer>
    <experiments>2</experiments>
</comment>
<comment type="interaction">
    <interactant intactId="EBI-7014859">
        <id>Q5TCZ1-2</id>
    </interactant>
    <interactant intactId="EBI-297487">
        <id>Q07889</id>
        <label>SOS1</label>
    </interactant>
    <organismsDiffer>false</organismsDiffer>
    <experiments>5</experiments>
</comment>
<comment type="interaction">
    <interactant intactId="EBI-7014859">
        <id>Q5TCZ1-2</id>
    </interactant>
    <interactant intactId="EBI-80070">
        <id>P21575</id>
        <label>Dnm1</label>
    </interactant>
    <organismsDiffer>true</organismsDiffer>
    <experiments>2</experiments>
</comment>
<comment type="subcellular location">
    <subcellularLocation>
        <location>Cytoplasm</location>
    </subcellularLocation>
    <subcellularLocation>
        <location evidence="7">Cell projection</location>
        <location evidence="7">Podosome</location>
    </subcellularLocation>
    <text evidence="7">Cytoplasmic in normal cells and localizes to podosomes in SRC-transformed cells.</text>
</comment>
<comment type="alternative products">
    <event type="alternative splicing"/>
    <isoform>
        <id>Q5TCZ1-1</id>
        <name>1</name>
        <sequence type="displayed"/>
    </isoform>
    <isoform>
        <id>Q5TCZ1-2</id>
        <name>2</name>
        <sequence type="described" ref="VSP_023312 VSP_023313"/>
    </isoform>
    <isoform>
        <id>Q5TCZ1-3</id>
        <name>3</name>
        <sequence type="described" ref="VSP_023313"/>
    </isoform>
</comment>
<comment type="tissue specificity">
    <text evidence="8">Found in several cancer cell lines, particularly invasive breast carcinomas and melanomas.</text>
</comment>
<comment type="domain">
    <text evidence="1 13">The PX domain is required for podosome localization because of its ability to bind phosphatidylinositol 3-phosphate (PtdIns(3)P) and phosphatidylinositol 3,4-bisphosphate (PtdIns(3,4)P2) and, to a lesser extent, phosphatidylinositol 4-phosphate (PtdIns(4)P), phosphatidylinositol 5-phosphate (PtdIns(5)P), and phosphatidylinositol 3,5-bisphosphate (PtdIns(3,5)P2). Binds to the third intramolecular SH3 domain (By similarity). Required for interaction with RAB40B (PubMed:27789576).</text>
</comment>
<comment type="domain">
    <text evidence="7 8">The fifth SH3 domain mediates binding with ADAM12, ADAM15 and ADAM19.</text>
</comment>
<comment type="PTM">
    <text>Tyrosine phosphorylated by SRC. Phosphorylation plays a regulatory role in the protein localization. The intramolecular interaction of the PX domain with the third SH3 domain maintains the protein in the cytoplasm and phosphorylation disrupts this interaction, resulting in the redistribution of the protein from cytoplasm to the perimembrane region. Phosphorylated on serine upon DNA damage, probably by ATM or ATR.</text>
</comment>
<comment type="miscellaneous">
    <molecule>Isoform 3</molecule>
    <text evidence="17">Gene prediction based on similarity to mouse ortholog and partial transcript data.</text>
</comment>
<comment type="similarity">
    <text evidence="17">Belongs to the SH3PXD2 family.</text>
</comment>
<comment type="sequence caution" evidence="17">
    <conflict type="erroneous initiation">
        <sequence resource="EMBL-CDS" id="BAA24848"/>
    </conflict>
    <text>Extended N-terminus.</text>
</comment>
<dbReference type="EMBL" id="AB007878">
    <property type="protein sequence ID" value="BAA24848.2"/>
    <property type="status" value="ALT_INIT"/>
    <property type="molecule type" value="mRNA"/>
</dbReference>
<dbReference type="EMBL" id="AL121929">
    <property type="status" value="NOT_ANNOTATED_CDS"/>
    <property type="molecule type" value="Genomic_DNA"/>
</dbReference>
<dbReference type="EMBL" id="AL133355">
    <property type="status" value="NOT_ANNOTATED_CDS"/>
    <property type="molecule type" value="Genomic_DNA"/>
</dbReference>
<dbReference type="EMBL" id="CH471066">
    <property type="protein sequence ID" value="EAW49623.1"/>
    <property type="molecule type" value="Genomic_DNA"/>
</dbReference>
<dbReference type="EMBL" id="CH471066">
    <property type="protein sequence ID" value="EAW49624.1"/>
    <property type="molecule type" value="Genomic_DNA"/>
</dbReference>
<dbReference type="CCDS" id="CCDS31278.1">
    <molecule id="Q5TCZ1-3"/>
</dbReference>
<dbReference type="CCDS" id="CCDS91343.1">
    <molecule id="Q5TCZ1-1"/>
</dbReference>
<dbReference type="PIR" id="T00056">
    <property type="entry name" value="T00056"/>
</dbReference>
<dbReference type="RefSeq" id="NP_001380944.1">
    <molecule id="Q5TCZ1-1"/>
    <property type="nucleotide sequence ID" value="NM_001394015.1"/>
</dbReference>
<dbReference type="RefSeq" id="NP_001380951.1">
    <molecule id="Q5TCZ1-2"/>
    <property type="nucleotide sequence ID" value="NM_001394022.1"/>
</dbReference>
<dbReference type="RefSeq" id="NP_001380952.1">
    <molecule id="Q5TCZ1-2"/>
    <property type="nucleotide sequence ID" value="NM_001394023.1"/>
</dbReference>
<dbReference type="RefSeq" id="NP_055446.2">
    <molecule id="Q5TCZ1-3"/>
    <property type="nucleotide sequence ID" value="NM_014631.2"/>
</dbReference>
<dbReference type="RefSeq" id="XP_005270351.1">
    <property type="nucleotide sequence ID" value="XM_005270294.4"/>
</dbReference>
<dbReference type="PDB" id="2DNU">
    <property type="method" value="NMR"/>
    <property type="chains" value="A=268-325"/>
</dbReference>
<dbReference type="PDB" id="2EGA">
    <property type="method" value="NMR"/>
    <property type="chains" value="A=168-224"/>
</dbReference>
<dbReference type="PDB" id="2EGC">
    <property type="method" value="NMR"/>
    <property type="chains" value="A=1072-1133"/>
</dbReference>
<dbReference type="PDB" id="2EKH">
    <property type="method" value="NMR"/>
    <property type="chains" value="A=842-908"/>
</dbReference>
<dbReference type="PDBsum" id="2DNU"/>
<dbReference type="PDBsum" id="2EGA"/>
<dbReference type="PDBsum" id="2EGC"/>
<dbReference type="PDBsum" id="2EKH"/>
<dbReference type="SMR" id="Q5TCZ1"/>
<dbReference type="BioGRID" id="115002">
    <property type="interactions" value="122"/>
</dbReference>
<dbReference type="FunCoup" id="Q5TCZ1">
    <property type="interactions" value="529"/>
</dbReference>
<dbReference type="IntAct" id="Q5TCZ1">
    <property type="interactions" value="30"/>
</dbReference>
<dbReference type="MINT" id="Q5TCZ1"/>
<dbReference type="STRING" id="9606.ENSP00000348215"/>
<dbReference type="GlyCosmos" id="Q5TCZ1">
    <property type="glycosylation" value="1 site, 1 glycan"/>
</dbReference>
<dbReference type="GlyGen" id="Q5TCZ1">
    <property type="glycosylation" value="6 sites, 4 N-linked glycans (4 sites), 1 O-linked glycan (1 site)"/>
</dbReference>
<dbReference type="iPTMnet" id="Q5TCZ1"/>
<dbReference type="PhosphoSitePlus" id="Q5TCZ1"/>
<dbReference type="BioMuta" id="SH3PXD2A"/>
<dbReference type="DMDM" id="74746151"/>
<dbReference type="jPOST" id="Q5TCZ1"/>
<dbReference type="MassIVE" id="Q5TCZ1"/>
<dbReference type="PaxDb" id="9606-ENSP00000348215"/>
<dbReference type="PeptideAtlas" id="Q5TCZ1"/>
<dbReference type="ProteomicsDB" id="64997">
    <molecule id="Q5TCZ1-1"/>
</dbReference>
<dbReference type="ProteomicsDB" id="64998">
    <molecule id="Q5TCZ1-2"/>
</dbReference>
<dbReference type="ProteomicsDB" id="64999">
    <molecule id="Q5TCZ1-3"/>
</dbReference>
<dbReference type="Pumba" id="Q5TCZ1"/>
<dbReference type="ABCD" id="Q5TCZ1">
    <property type="antibodies" value="9 sequenced antibodies"/>
</dbReference>
<dbReference type="Antibodypedia" id="46067">
    <property type="antibodies" value="181 antibodies from 32 providers"/>
</dbReference>
<dbReference type="DNASU" id="9644"/>
<dbReference type="Ensembl" id="ENST00000355946.7">
    <molecule id="Q5TCZ1-3"/>
    <property type="protein sequence ID" value="ENSP00000348215.2"/>
    <property type="gene ID" value="ENSG00000107957.17"/>
</dbReference>
<dbReference type="Ensembl" id="ENST00000369774.9">
    <molecule id="Q5TCZ1-1"/>
    <property type="protein sequence ID" value="ENSP00000358789.4"/>
    <property type="gene ID" value="ENSG00000107957.17"/>
</dbReference>
<dbReference type="GeneID" id="9644"/>
<dbReference type="KEGG" id="hsa:9644"/>
<dbReference type="MANE-Select" id="ENST00000369774.9">
    <property type="protein sequence ID" value="ENSP00000358789.4"/>
    <property type="RefSeq nucleotide sequence ID" value="NM_001394015.1"/>
    <property type="RefSeq protein sequence ID" value="NP_001380944.1"/>
</dbReference>
<dbReference type="UCSC" id="uc001kxj.2">
    <molecule id="Q5TCZ1-1"/>
    <property type="organism name" value="human"/>
</dbReference>
<dbReference type="AGR" id="HGNC:23664"/>
<dbReference type="CTD" id="9644"/>
<dbReference type="DisGeNET" id="9644"/>
<dbReference type="GeneCards" id="SH3PXD2A"/>
<dbReference type="HGNC" id="HGNC:23664">
    <property type="gene designation" value="SH3PXD2A"/>
</dbReference>
<dbReference type="HPA" id="ENSG00000107957">
    <property type="expression patterns" value="Low tissue specificity"/>
</dbReference>
<dbReference type="MalaCards" id="SH3PXD2A"/>
<dbReference type="MIM" id="619455">
    <property type="type" value="gene"/>
</dbReference>
<dbReference type="neXtProt" id="NX_Q5TCZ1"/>
<dbReference type="OpenTargets" id="ENSG00000107957"/>
<dbReference type="Orphanet" id="252128">
    <property type="disease" value="Malignant peripheral nerve sheath tumor with perineurial differentiation"/>
</dbReference>
<dbReference type="Orphanet" id="252212">
    <property type="disease" value="Malignant triton tumor"/>
</dbReference>
<dbReference type="PharmGKB" id="PA134956816"/>
<dbReference type="VEuPathDB" id="HostDB:ENSG00000107957"/>
<dbReference type="eggNOG" id="KOG0905">
    <property type="taxonomic scope" value="Eukaryota"/>
</dbReference>
<dbReference type="GeneTree" id="ENSGT00940000157732"/>
<dbReference type="HOGENOM" id="CLU_013051_0_0_1"/>
<dbReference type="InParanoid" id="Q5TCZ1"/>
<dbReference type="OMA" id="SHAIFYS"/>
<dbReference type="OrthoDB" id="10255964at2759"/>
<dbReference type="PAN-GO" id="Q5TCZ1">
    <property type="GO annotations" value="3 GO annotations based on evolutionary models"/>
</dbReference>
<dbReference type="PhylomeDB" id="Q5TCZ1"/>
<dbReference type="TreeFam" id="TF329347"/>
<dbReference type="PathwayCommons" id="Q5TCZ1"/>
<dbReference type="Reactome" id="R-HSA-8941237">
    <property type="pathway name" value="Invadopodia formation"/>
</dbReference>
<dbReference type="Reactome" id="R-HSA-9013148">
    <property type="pathway name" value="CDC42 GTPase cycle"/>
</dbReference>
<dbReference type="SignaLink" id="Q5TCZ1"/>
<dbReference type="SIGNOR" id="Q5TCZ1"/>
<dbReference type="BioGRID-ORCS" id="9644">
    <property type="hits" value="16 hits in 1127 CRISPR screens"/>
</dbReference>
<dbReference type="CD-CODE" id="FB4E32DD">
    <property type="entry name" value="Presynaptic clusters and postsynaptic densities"/>
</dbReference>
<dbReference type="ChiTaRS" id="SH3PXD2A">
    <property type="organism name" value="human"/>
</dbReference>
<dbReference type="EvolutionaryTrace" id="Q5TCZ1"/>
<dbReference type="GeneWiki" id="SH3PXD2A"/>
<dbReference type="GenomeRNAi" id="9644"/>
<dbReference type="Pharos" id="Q5TCZ1">
    <property type="development level" value="Tbio"/>
</dbReference>
<dbReference type="PRO" id="PR:Q5TCZ1"/>
<dbReference type="Proteomes" id="UP000005640">
    <property type="component" value="Chromosome 10"/>
</dbReference>
<dbReference type="RNAct" id="Q5TCZ1">
    <property type="molecule type" value="protein"/>
</dbReference>
<dbReference type="Bgee" id="ENSG00000107957">
    <property type="expression patterns" value="Expressed in sural nerve and 191 other cell types or tissues"/>
</dbReference>
<dbReference type="ExpressionAtlas" id="Q5TCZ1">
    <property type="expression patterns" value="baseline and differential"/>
</dbReference>
<dbReference type="GO" id="GO:0070161">
    <property type="term" value="C:anchoring junction"/>
    <property type="evidence" value="ECO:0007669"/>
    <property type="project" value="UniProtKB-KW"/>
</dbReference>
<dbReference type="GO" id="GO:0042995">
    <property type="term" value="C:cell projection"/>
    <property type="evidence" value="ECO:0007669"/>
    <property type="project" value="UniProtKB-KW"/>
</dbReference>
<dbReference type="GO" id="GO:0005737">
    <property type="term" value="C:cytoplasm"/>
    <property type="evidence" value="ECO:0000318"/>
    <property type="project" value="GO_Central"/>
</dbReference>
<dbReference type="GO" id="GO:0005829">
    <property type="term" value="C:cytosol"/>
    <property type="evidence" value="ECO:0000314"/>
    <property type="project" value="HPA"/>
</dbReference>
<dbReference type="GO" id="GO:0002102">
    <property type="term" value="C:podosome"/>
    <property type="evidence" value="ECO:0000314"/>
    <property type="project" value="UniProtKB"/>
</dbReference>
<dbReference type="GO" id="GO:0043325">
    <property type="term" value="F:phosphatidylinositol-3,4-bisphosphate binding"/>
    <property type="evidence" value="ECO:0007669"/>
    <property type="project" value="Ensembl"/>
</dbReference>
<dbReference type="GO" id="GO:0032266">
    <property type="term" value="F:phosphatidylinositol-3-phosphate binding"/>
    <property type="evidence" value="ECO:0007669"/>
    <property type="project" value="Ensembl"/>
</dbReference>
<dbReference type="GO" id="GO:0005546">
    <property type="term" value="F:phosphatidylinositol-4,5-bisphosphate binding"/>
    <property type="evidence" value="ECO:0007669"/>
    <property type="project" value="Ensembl"/>
</dbReference>
<dbReference type="GO" id="GO:0070273">
    <property type="term" value="F:phosphatidylinositol-4-phosphate binding"/>
    <property type="evidence" value="ECO:0007669"/>
    <property type="project" value="Ensembl"/>
</dbReference>
<dbReference type="GO" id="GO:0010314">
    <property type="term" value="F:phosphatidylinositol-5-phosphate binding"/>
    <property type="evidence" value="ECO:0007669"/>
    <property type="project" value="Ensembl"/>
</dbReference>
<dbReference type="GO" id="GO:0002020">
    <property type="term" value="F:protease binding"/>
    <property type="evidence" value="ECO:0007669"/>
    <property type="project" value="Ensembl"/>
</dbReference>
<dbReference type="GO" id="GO:0016176">
    <property type="term" value="F:superoxide-generating NADPH oxidase activator activity"/>
    <property type="evidence" value="ECO:0000318"/>
    <property type="project" value="GO_Central"/>
</dbReference>
<dbReference type="GO" id="GO:0001701">
    <property type="term" value="P:in utero embryonic development"/>
    <property type="evidence" value="ECO:0007669"/>
    <property type="project" value="Ensembl"/>
</dbReference>
<dbReference type="GO" id="GO:0072675">
    <property type="term" value="P:osteoclast fusion"/>
    <property type="evidence" value="ECO:0000315"/>
    <property type="project" value="CACAO"/>
</dbReference>
<dbReference type="GO" id="GO:0042554">
    <property type="term" value="P:superoxide anion generation"/>
    <property type="evidence" value="ECO:0000318"/>
    <property type="project" value="GO_Central"/>
</dbReference>
<dbReference type="GO" id="GO:0006801">
    <property type="term" value="P:superoxide metabolic process"/>
    <property type="evidence" value="ECO:0000314"/>
    <property type="project" value="UniProtKB"/>
</dbReference>
<dbReference type="CDD" id="cd06888">
    <property type="entry name" value="PX_FISH"/>
    <property type="match status" value="1"/>
</dbReference>
<dbReference type="CDD" id="cd12074">
    <property type="entry name" value="SH3_Tks5_1"/>
    <property type="match status" value="1"/>
</dbReference>
<dbReference type="CDD" id="cd12077">
    <property type="entry name" value="SH3_Tks5_2"/>
    <property type="match status" value="1"/>
</dbReference>
<dbReference type="CDD" id="cd12079">
    <property type="entry name" value="SH3_Tks5_3"/>
    <property type="match status" value="1"/>
</dbReference>
<dbReference type="CDD" id="cd12019">
    <property type="entry name" value="SH3_Tks5_4"/>
    <property type="match status" value="1"/>
</dbReference>
<dbReference type="CDD" id="cd12020">
    <property type="entry name" value="SH3_Tks5_5"/>
    <property type="match status" value="1"/>
</dbReference>
<dbReference type="FunFam" id="2.30.30.40:FF:000020">
    <property type="entry name" value="SH3 and PX domain-containing protein 2A"/>
    <property type="match status" value="1"/>
</dbReference>
<dbReference type="FunFam" id="2.30.30.40:FF:000031">
    <property type="entry name" value="SH3 and PX domain-containing protein 2A"/>
    <property type="match status" value="1"/>
</dbReference>
<dbReference type="FunFam" id="2.30.30.40:FF:000042">
    <property type="entry name" value="SH3 and PX domain-containing protein 2A"/>
    <property type="match status" value="1"/>
</dbReference>
<dbReference type="FunFam" id="2.30.30.40:FF:000059">
    <property type="entry name" value="SH3 and PX domain-containing protein 2A"/>
    <property type="match status" value="1"/>
</dbReference>
<dbReference type="FunFam" id="3.30.1520.10:FF:000005">
    <property type="entry name" value="SH3 and PX domain-containing protein 2B"/>
    <property type="match status" value="1"/>
</dbReference>
<dbReference type="FunFam" id="2.30.30.40:FF:000194">
    <property type="entry name" value="SH3 and PX domains 2A"/>
    <property type="match status" value="1"/>
</dbReference>
<dbReference type="Gene3D" id="3.30.1520.10">
    <property type="entry name" value="Phox-like domain"/>
    <property type="match status" value="1"/>
</dbReference>
<dbReference type="Gene3D" id="2.30.30.40">
    <property type="entry name" value="SH3 Domains"/>
    <property type="match status" value="5"/>
</dbReference>
<dbReference type="InterPro" id="IPR051228">
    <property type="entry name" value="NADPH_Oxidase/PX-Domain"/>
</dbReference>
<dbReference type="InterPro" id="IPR001683">
    <property type="entry name" value="PX_dom"/>
</dbReference>
<dbReference type="InterPro" id="IPR036871">
    <property type="entry name" value="PX_dom_sf"/>
</dbReference>
<dbReference type="InterPro" id="IPR036028">
    <property type="entry name" value="SH3-like_dom_sf"/>
</dbReference>
<dbReference type="InterPro" id="IPR001452">
    <property type="entry name" value="SH3_domain"/>
</dbReference>
<dbReference type="InterPro" id="IPR037961">
    <property type="entry name" value="SH3PXD2_PX"/>
</dbReference>
<dbReference type="InterPro" id="IPR035450">
    <property type="entry name" value="SH3PXD2A_SH3_1"/>
</dbReference>
<dbReference type="InterPro" id="IPR035452">
    <property type="entry name" value="SH3PXD2A_SH3_2"/>
</dbReference>
<dbReference type="InterPro" id="IPR035449">
    <property type="entry name" value="SH3PXD2A_SH3_3"/>
</dbReference>
<dbReference type="InterPro" id="IPR035453">
    <property type="entry name" value="SH3PXD2A_SH3_4"/>
</dbReference>
<dbReference type="InterPro" id="IPR035454">
    <property type="entry name" value="SH3PXD2A_SH3_5"/>
</dbReference>
<dbReference type="PANTHER" id="PTHR15706:SF2">
    <property type="entry name" value="SH3 AND PX DOMAIN-CONTAINING PROTEIN 2A"/>
    <property type="match status" value="1"/>
</dbReference>
<dbReference type="PANTHER" id="PTHR15706">
    <property type="entry name" value="SH3 MULTIPLE DOMAIN"/>
    <property type="match status" value="1"/>
</dbReference>
<dbReference type="Pfam" id="PF00787">
    <property type="entry name" value="PX"/>
    <property type="match status" value="1"/>
</dbReference>
<dbReference type="Pfam" id="PF00018">
    <property type="entry name" value="SH3_1"/>
    <property type="match status" value="3"/>
</dbReference>
<dbReference type="Pfam" id="PF07653">
    <property type="entry name" value="SH3_2"/>
    <property type="match status" value="1"/>
</dbReference>
<dbReference type="SMART" id="SM00312">
    <property type="entry name" value="PX"/>
    <property type="match status" value="1"/>
</dbReference>
<dbReference type="SMART" id="SM00326">
    <property type="entry name" value="SH3"/>
    <property type="match status" value="5"/>
</dbReference>
<dbReference type="SUPFAM" id="SSF64268">
    <property type="entry name" value="PX domain"/>
    <property type="match status" value="1"/>
</dbReference>
<dbReference type="SUPFAM" id="SSF50044">
    <property type="entry name" value="SH3-domain"/>
    <property type="match status" value="5"/>
</dbReference>
<dbReference type="PROSITE" id="PS50195">
    <property type="entry name" value="PX"/>
    <property type="match status" value="1"/>
</dbReference>
<dbReference type="PROSITE" id="PS50002">
    <property type="entry name" value="SH3"/>
    <property type="match status" value="5"/>
</dbReference>
<name>SPD2A_HUMAN</name>
<feature type="chain" id="PRO_0000278488" description="SH3 and PX domain-containing protein 2A">
    <location>
        <begin position="1"/>
        <end position="1133"/>
    </location>
</feature>
<feature type="domain" description="PX" evidence="4">
    <location>
        <begin position="4"/>
        <end position="128"/>
    </location>
</feature>
<feature type="domain" description="SH3 1" evidence="5">
    <location>
        <begin position="166"/>
        <end position="225"/>
    </location>
</feature>
<feature type="domain" description="SH3 2" evidence="5">
    <location>
        <begin position="266"/>
        <end position="325"/>
    </location>
</feature>
<feature type="domain" description="SH3 3" evidence="5">
    <location>
        <begin position="448"/>
        <end position="507"/>
    </location>
</feature>
<feature type="domain" description="SH3 4" evidence="5">
    <location>
        <begin position="840"/>
        <end position="899"/>
    </location>
</feature>
<feature type="domain" description="SH3 5" evidence="5">
    <location>
        <begin position="1072"/>
        <end position="1133"/>
    </location>
</feature>
<feature type="region of interest" description="Disordered" evidence="6">
    <location>
        <begin position="415"/>
        <end position="446"/>
    </location>
</feature>
<feature type="region of interest" description="Disordered" evidence="6">
    <location>
        <begin position="505"/>
        <end position="840"/>
    </location>
</feature>
<feature type="region of interest" description="Disordered" evidence="6">
    <location>
        <begin position="899"/>
        <end position="924"/>
    </location>
</feature>
<feature type="region of interest" description="Disordered" evidence="6">
    <location>
        <begin position="941"/>
        <end position="964"/>
    </location>
</feature>
<feature type="region of interest" description="Disordered" evidence="6">
    <location>
        <begin position="1029"/>
        <end position="1059"/>
    </location>
</feature>
<feature type="coiled-coil region" evidence="3">
    <location>
        <begin position="917"/>
        <end position="946"/>
    </location>
</feature>
<feature type="compositionally biased region" description="Basic and acidic residues" evidence="6">
    <location>
        <begin position="546"/>
        <end position="555"/>
    </location>
</feature>
<feature type="compositionally biased region" description="Acidic residues" evidence="6">
    <location>
        <begin position="567"/>
        <end position="576"/>
    </location>
</feature>
<feature type="compositionally biased region" description="Basic and acidic residues" evidence="6">
    <location>
        <begin position="577"/>
        <end position="586"/>
    </location>
</feature>
<feature type="compositionally biased region" description="Acidic residues" evidence="6">
    <location>
        <begin position="608"/>
        <end position="620"/>
    </location>
</feature>
<feature type="compositionally biased region" description="Low complexity" evidence="6">
    <location>
        <begin position="634"/>
        <end position="652"/>
    </location>
</feature>
<feature type="compositionally biased region" description="Low complexity" evidence="6">
    <location>
        <begin position="658"/>
        <end position="670"/>
    </location>
</feature>
<feature type="compositionally biased region" description="Low complexity" evidence="6">
    <location>
        <begin position="686"/>
        <end position="715"/>
    </location>
</feature>
<feature type="modified residue" description="Phosphothreonine" evidence="2">
    <location>
        <position position="256"/>
    </location>
</feature>
<feature type="modified residue" description="Phosphoserine" evidence="21">
    <location>
        <position position="406"/>
    </location>
</feature>
<feature type="modified residue" description="Phosphoserine" evidence="19 21">
    <location>
        <position position="421"/>
    </location>
</feature>
<feature type="modified residue" description="Phosphoserine" evidence="19 21 22">
    <location>
        <position position="547"/>
    </location>
</feature>
<feature type="modified residue" description="Phosphoserine" evidence="19">
    <location>
        <position position="567"/>
    </location>
</feature>
<feature type="modified residue" description="Phosphoserine" evidence="19">
    <location>
        <position position="593"/>
    </location>
</feature>
<feature type="modified residue" description="Phosphoserine" evidence="19">
    <location>
        <position position="644"/>
    </location>
</feature>
<feature type="modified residue" description="Phosphothreonine" evidence="19">
    <location>
        <position position="731"/>
    </location>
</feature>
<feature type="modified residue" description="Phosphoserine" evidence="2">
    <location>
        <position position="767"/>
    </location>
</feature>
<feature type="modified residue" description="Phosphoserine" evidence="2">
    <location>
        <position position="769"/>
    </location>
</feature>
<feature type="modified residue" description="Phosphoserine" evidence="2">
    <location>
        <position position="819"/>
    </location>
</feature>
<feature type="modified residue" description="Phosphothreonine" evidence="2">
    <location>
        <position position="829"/>
    </location>
</feature>
<feature type="modified residue" description="Phosphoserine" evidence="19 20 21">
    <location>
        <position position="1002"/>
    </location>
</feature>
<feature type="modified residue" description="Phosphoserine" evidence="19">
    <location>
        <position position="1016"/>
    </location>
</feature>
<feature type="modified residue" description="Phosphoserine" evidence="19">
    <location>
        <position position="1017"/>
    </location>
</feature>
<feature type="modified residue" description="Phosphoserine" evidence="19 21 22">
    <location>
        <position position="1038"/>
    </location>
</feature>
<feature type="splice variant" id="VSP_023312" description="In isoform 2." evidence="15">
    <location>
        <begin position="1"/>
        <end position="165"/>
    </location>
</feature>
<feature type="splice variant" id="VSP_023313" description="In isoform 2 and isoform 3." evidence="15">
    <location>
        <begin position="240"/>
        <end position="267"/>
    </location>
</feature>
<feature type="sequence variant" id="VAR_030781" description="In dbSNP:rs11818820.">
    <original>K</original>
    <variation>Q</variation>
    <location>
        <position position="659"/>
    </location>
</feature>
<feature type="sequence variant" id="VAR_030782" description="In dbSNP:rs3781365.">
    <original>R</original>
    <variation>Q</variation>
    <location>
        <position position="1035"/>
    </location>
</feature>
<feature type="sequence variant" id="VAR_056993" description="In dbSNP:rs12764700.">
    <original>L</original>
    <variation>P</variation>
    <location>
        <position position="1073"/>
    </location>
</feature>
<feature type="mutagenesis site" description="Loss of interaction with RAB40B." evidence="13">
    <original>Y</original>
    <variation>A</variation>
    <location>
        <position position="24"/>
    </location>
</feature>
<feature type="mutagenesis site" description="Loss of binding to (PtdIns(3)P) and (PtdIns(3,4)P2)." evidence="7">
    <original>R</original>
    <variation>A</variation>
    <location>
        <position position="42"/>
    </location>
</feature>
<feature type="mutagenesis site" description="Loss of binding to (PtdIns(3)P) and (PtdIns(3,4)P2)." evidence="7">
    <original>R</original>
    <variation>A</variation>
    <location>
        <position position="93"/>
    </location>
</feature>
<feature type="strand" evidence="24">
    <location>
        <begin position="181"/>
        <end position="184"/>
    </location>
</feature>
<feature type="strand" evidence="24">
    <location>
        <begin position="194"/>
        <end position="198"/>
    </location>
</feature>
<feature type="strand" evidence="24">
    <location>
        <begin position="202"/>
        <end position="207"/>
    </location>
</feature>
<feature type="strand" evidence="24">
    <location>
        <begin position="212"/>
        <end position="216"/>
    </location>
</feature>
<feature type="helix" evidence="24">
    <location>
        <begin position="217"/>
        <end position="219"/>
    </location>
</feature>
<feature type="strand" evidence="24">
    <location>
        <begin position="221"/>
        <end position="223"/>
    </location>
</feature>
<feature type="strand" evidence="23">
    <location>
        <begin position="268"/>
        <end position="272"/>
    </location>
</feature>
<feature type="strand" evidence="23">
    <location>
        <begin position="292"/>
        <end position="295"/>
    </location>
</feature>
<feature type="strand" evidence="23">
    <location>
        <begin position="300"/>
        <end position="308"/>
    </location>
</feature>
<feature type="strand" evidence="23">
    <location>
        <begin position="311"/>
        <end position="316"/>
    </location>
</feature>
<feature type="helix" evidence="23">
    <location>
        <begin position="317"/>
        <end position="319"/>
    </location>
</feature>
<feature type="strand" evidence="26">
    <location>
        <begin position="843"/>
        <end position="847"/>
    </location>
</feature>
<feature type="strand" evidence="26">
    <location>
        <begin position="866"/>
        <end position="872"/>
    </location>
</feature>
<feature type="strand" evidence="26">
    <location>
        <begin position="876"/>
        <end position="882"/>
    </location>
</feature>
<feature type="strand" evidence="26">
    <location>
        <begin position="885"/>
        <end position="890"/>
    </location>
</feature>
<feature type="turn" evidence="26">
    <location>
        <begin position="891"/>
        <end position="893"/>
    </location>
</feature>
<feature type="strand" evidence="25">
    <location>
        <begin position="1075"/>
        <end position="1079"/>
    </location>
</feature>
<feature type="strand" evidence="25">
    <location>
        <begin position="1087"/>
        <end position="1089"/>
    </location>
</feature>
<feature type="strand" evidence="25">
    <location>
        <begin position="1097"/>
        <end position="1100"/>
    </location>
</feature>
<feature type="strand" evidence="25">
    <location>
        <begin position="1107"/>
        <end position="1113"/>
    </location>
</feature>
<feature type="strand" evidence="25">
    <location>
        <begin position="1116"/>
        <end position="1118"/>
    </location>
</feature>
<feature type="strand" evidence="25">
    <location>
        <begin position="1120"/>
        <end position="1125"/>
    </location>
</feature>
<feature type="helix" evidence="25">
    <location>
        <begin position="1126"/>
        <end position="1128"/>
    </location>
</feature>
<feature type="strand" evidence="25">
    <location>
        <begin position="1129"/>
        <end position="1131"/>
    </location>
</feature>
<accession>Q5TCZ1</accession>
<accession>D3DR98</accession>
<accession>O43302</accession>
<accession>Q5TCZ2</accession>
<accession>Q5TDQ8</accession>
<keyword id="KW-0002">3D-structure</keyword>
<keyword id="KW-0025">Alternative splicing</keyword>
<keyword id="KW-0965">Cell junction</keyword>
<keyword id="KW-0966">Cell projection</keyword>
<keyword id="KW-0175">Coiled coil</keyword>
<keyword id="KW-0963">Cytoplasm</keyword>
<keyword id="KW-0597">Phosphoprotein</keyword>
<keyword id="KW-1267">Proteomics identification</keyword>
<keyword id="KW-1185">Reference proteome</keyword>
<keyword id="KW-0677">Repeat</keyword>
<keyword id="KW-0728">SH3 domain</keyword>
<protein>
    <recommendedName>
        <fullName>SH3 and PX domain-containing protein 2A</fullName>
    </recommendedName>
    <alternativeName>
        <fullName evidence="14">Adapter protein TKS5</fullName>
    </alternativeName>
    <alternativeName>
        <fullName>Five SH3 domain-containing protein</fullName>
    </alternativeName>
    <alternativeName>
        <fullName>SH3 multiple domains protein 1</fullName>
    </alternativeName>
    <alternativeName>
        <fullName>Tyrosine kinase substrate with five SH3 domains</fullName>
    </alternativeName>
</protein>
<gene>
    <name evidence="18" type="primary">SH3PXD2A</name>
    <name evidence="14" type="synonym">FISH</name>
    <name evidence="16" type="synonym">KIAA0418</name>
    <name type="synonym">SH3MD1</name>
    <name evidence="14" type="synonym">TKS5</name>
</gene>